<evidence type="ECO:0000255" key="1"/>
<evidence type="ECO:0000255" key="2">
    <source>
        <dbReference type="PROSITE-ProRule" id="PRU00581"/>
    </source>
</evidence>
<evidence type="ECO:0000305" key="3"/>
<organism>
    <name type="scientific">Mus musculus</name>
    <name type="common">Mouse</name>
    <dbReference type="NCBI Taxonomy" id="10090"/>
    <lineage>
        <taxon>Eukaryota</taxon>
        <taxon>Metazoa</taxon>
        <taxon>Chordata</taxon>
        <taxon>Craniata</taxon>
        <taxon>Vertebrata</taxon>
        <taxon>Euteleostomi</taxon>
        <taxon>Mammalia</taxon>
        <taxon>Eutheria</taxon>
        <taxon>Euarchontoglires</taxon>
        <taxon>Glires</taxon>
        <taxon>Rodentia</taxon>
        <taxon>Myomorpha</taxon>
        <taxon>Muroidea</taxon>
        <taxon>Muridae</taxon>
        <taxon>Murinae</taxon>
        <taxon>Mus</taxon>
        <taxon>Mus</taxon>
    </lineage>
</organism>
<proteinExistence type="evidence at protein level"/>
<sequence length="320" mass="35285">MPVTVTRTTITTTTSSSTTVGSARALTQPLGLLRLLQLISTCVAFSLVASVGAWTGPMGNWAMFTWCFCFAVTLIILIVELGGLQAHFPLSWRNFPITFACYAALFCLSSSIIYPTTYVQFLAHGRTRDHAIAATTFSCVACLAYATEVAWTRARPGEITGYMATVPGLLKVFETFVACIIFAFISEPLLYNQKPALEWCVAVYAICFILAGVTILLNLGDCTNVLPIPFPTFLSGLALLSVLFYATAIVLWPLYQFDQRYQGQPRRSMDPSCTRSISYIQPNTVCFWDRRLAVSILTGINLLAYVSDLVYSTRLVFVKV</sequence>
<gene>
    <name type="primary">Myadm</name>
    <name type="synonym">Mug</name>
</gene>
<protein>
    <recommendedName>
        <fullName>Myeloid-associated differentiation marker</fullName>
    </recommendedName>
    <alternativeName>
        <fullName>Myeloid up-regulated protein</fullName>
    </alternativeName>
</protein>
<dbReference type="EMBL" id="AJ001616">
    <property type="protein sequence ID" value="CAA04870.1"/>
    <property type="status" value="ALT_FRAME"/>
    <property type="molecule type" value="mRNA"/>
</dbReference>
<dbReference type="EMBL" id="AK052258">
    <property type="protein sequence ID" value="BAC34900.1"/>
    <property type="molecule type" value="mRNA"/>
</dbReference>
<dbReference type="EMBL" id="AK053414">
    <property type="protein sequence ID" value="BAC35377.1"/>
    <property type="molecule type" value="mRNA"/>
</dbReference>
<dbReference type="EMBL" id="AK089538">
    <property type="protein sequence ID" value="BAC40918.1"/>
    <property type="molecule type" value="mRNA"/>
</dbReference>
<dbReference type="EMBL" id="AK149962">
    <property type="protein sequence ID" value="BAE29196.1"/>
    <property type="molecule type" value="mRNA"/>
</dbReference>
<dbReference type="EMBL" id="AK159160">
    <property type="protein sequence ID" value="BAE34863.1"/>
    <property type="molecule type" value="mRNA"/>
</dbReference>
<dbReference type="CCDS" id="CCDS51964.1"/>
<dbReference type="RefSeq" id="NP_001087233.1">
    <property type="nucleotide sequence ID" value="NM_001093764.1"/>
</dbReference>
<dbReference type="RefSeq" id="NP_001087234.1">
    <property type="nucleotide sequence ID" value="NM_001093765.1"/>
</dbReference>
<dbReference type="RefSeq" id="NP_001087235.1">
    <property type="nucleotide sequence ID" value="NM_001093766.1"/>
</dbReference>
<dbReference type="RefSeq" id="NP_058665.2">
    <property type="nucleotide sequence ID" value="NM_016969.2"/>
</dbReference>
<dbReference type="RefSeq" id="XP_006540234.1">
    <property type="nucleotide sequence ID" value="XM_006540171.5"/>
</dbReference>
<dbReference type="SMR" id="O35682"/>
<dbReference type="BioGRID" id="206157">
    <property type="interactions" value="5"/>
</dbReference>
<dbReference type="FunCoup" id="O35682">
    <property type="interactions" value="227"/>
</dbReference>
<dbReference type="IntAct" id="O35682">
    <property type="interactions" value="2"/>
</dbReference>
<dbReference type="MINT" id="O35682"/>
<dbReference type="STRING" id="10090.ENSMUSP00000145120"/>
<dbReference type="GlyGen" id="O35682">
    <property type="glycosylation" value="1 site, 1 O-linked glycan (1 site)"/>
</dbReference>
<dbReference type="iPTMnet" id="O35682"/>
<dbReference type="PhosphoSitePlus" id="O35682"/>
<dbReference type="SwissPalm" id="O35682"/>
<dbReference type="jPOST" id="O35682"/>
<dbReference type="PaxDb" id="10090-ENSMUSP00000131318"/>
<dbReference type="PeptideAtlas" id="O35682"/>
<dbReference type="ProteomicsDB" id="287646"/>
<dbReference type="Pumba" id="O35682"/>
<dbReference type="Antibodypedia" id="19206">
    <property type="antibodies" value="239 antibodies from 20 providers"/>
</dbReference>
<dbReference type="DNASU" id="50918"/>
<dbReference type="Ensembl" id="ENSMUST00000096744.8">
    <property type="protein sequence ID" value="ENSMUSP00000094505.6"/>
    <property type="gene ID" value="ENSMUSG00000068566.14"/>
</dbReference>
<dbReference type="Ensembl" id="ENSMUST00000164553.8">
    <property type="protein sequence ID" value="ENSMUSP00000131318.2"/>
    <property type="gene ID" value="ENSMUSG00000068566.14"/>
</dbReference>
<dbReference type="Ensembl" id="ENSMUST00000203328.4">
    <property type="protein sequence ID" value="ENSMUSP00000144984.2"/>
    <property type="gene ID" value="ENSMUSG00000068566.14"/>
</dbReference>
<dbReference type="Ensembl" id="ENSMUST00000203566.3">
    <property type="protein sequence ID" value="ENSMUSP00000145120.2"/>
    <property type="gene ID" value="ENSMUSG00000068566.14"/>
</dbReference>
<dbReference type="GeneID" id="50918"/>
<dbReference type="KEGG" id="mmu:50918"/>
<dbReference type="UCSC" id="uc009eup.1">
    <property type="organism name" value="mouse"/>
</dbReference>
<dbReference type="AGR" id="MGI:1355332"/>
<dbReference type="CTD" id="91663"/>
<dbReference type="MGI" id="MGI:1355332">
    <property type="gene designation" value="Myadm"/>
</dbReference>
<dbReference type="VEuPathDB" id="HostDB:ENSMUSG00000068566"/>
<dbReference type="eggNOG" id="KOG4788">
    <property type="taxonomic scope" value="Eukaryota"/>
</dbReference>
<dbReference type="GeneTree" id="ENSGT00950000182933"/>
<dbReference type="HOGENOM" id="CLU_068368_0_0_1"/>
<dbReference type="InParanoid" id="O35682"/>
<dbReference type="OMA" id="GGMADWC"/>
<dbReference type="OrthoDB" id="8737882at2759"/>
<dbReference type="PhylomeDB" id="O35682"/>
<dbReference type="TreeFam" id="TF331088"/>
<dbReference type="BioGRID-ORCS" id="50918">
    <property type="hits" value="0 hits in 77 CRISPR screens"/>
</dbReference>
<dbReference type="ChiTaRS" id="Myadm">
    <property type="organism name" value="mouse"/>
</dbReference>
<dbReference type="PRO" id="PR:O35682"/>
<dbReference type="Proteomes" id="UP000000589">
    <property type="component" value="Chromosome 7"/>
</dbReference>
<dbReference type="RNAct" id="O35682">
    <property type="molecule type" value="protein"/>
</dbReference>
<dbReference type="Bgee" id="ENSMUSG00000068566">
    <property type="expression patterns" value="Expressed in internal carotid artery and 257 other cell types or tissues"/>
</dbReference>
<dbReference type="ExpressionAtlas" id="O35682">
    <property type="expression patterns" value="baseline and differential"/>
</dbReference>
<dbReference type="GO" id="GO:0005911">
    <property type="term" value="C:cell-cell junction"/>
    <property type="evidence" value="ECO:0007669"/>
    <property type="project" value="Ensembl"/>
</dbReference>
<dbReference type="GO" id="GO:0030864">
    <property type="term" value="C:cortical actin cytoskeleton"/>
    <property type="evidence" value="ECO:0007669"/>
    <property type="project" value="Ensembl"/>
</dbReference>
<dbReference type="GO" id="GO:0045121">
    <property type="term" value="C:membrane raft"/>
    <property type="evidence" value="ECO:0007669"/>
    <property type="project" value="Ensembl"/>
</dbReference>
<dbReference type="GO" id="GO:0005886">
    <property type="term" value="C:plasma membrane"/>
    <property type="evidence" value="ECO:0007669"/>
    <property type="project" value="Ensembl"/>
</dbReference>
<dbReference type="GO" id="GO:0001726">
    <property type="term" value="C:ruffle"/>
    <property type="evidence" value="ECO:0007669"/>
    <property type="project" value="Ensembl"/>
</dbReference>
<dbReference type="GO" id="GO:0061028">
    <property type="term" value="P:establishment of endothelial barrier"/>
    <property type="evidence" value="ECO:0007669"/>
    <property type="project" value="Ensembl"/>
</dbReference>
<dbReference type="GO" id="GO:0035556">
    <property type="term" value="P:intracellular signal transduction"/>
    <property type="evidence" value="ECO:0007669"/>
    <property type="project" value="Ensembl"/>
</dbReference>
<dbReference type="GO" id="GO:0031579">
    <property type="term" value="P:membrane raft organization"/>
    <property type="evidence" value="ECO:0007669"/>
    <property type="project" value="Ensembl"/>
</dbReference>
<dbReference type="GO" id="GO:0030837">
    <property type="term" value="P:negative regulation of actin filament polymerization"/>
    <property type="evidence" value="ECO:0007669"/>
    <property type="project" value="Ensembl"/>
</dbReference>
<dbReference type="GO" id="GO:0010629">
    <property type="term" value="P:negative regulation of gene expression"/>
    <property type="evidence" value="ECO:0007669"/>
    <property type="project" value="Ensembl"/>
</dbReference>
<dbReference type="GO" id="GO:0034115">
    <property type="term" value="P:negative regulation of heterotypic cell-cell adhesion"/>
    <property type="evidence" value="ECO:0007669"/>
    <property type="project" value="Ensembl"/>
</dbReference>
<dbReference type="GO" id="GO:0030335">
    <property type="term" value="P:positive regulation of cell migration"/>
    <property type="evidence" value="ECO:0007669"/>
    <property type="project" value="Ensembl"/>
</dbReference>
<dbReference type="GO" id="GO:1900026">
    <property type="term" value="P:positive regulation of substrate adhesion-dependent cell spreading"/>
    <property type="evidence" value="ECO:0007669"/>
    <property type="project" value="Ensembl"/>
</dbReference>
<dbReference type="GO" id="GO:0044860">
    <property type="term" value="P:protein localization to plasma membrane raft"/>
    <property type="evidence" value="ECO:0007669"/>
    <property type="project" value="Ensembl"/>
</dbReference>
<dbReference type="InterPro" id="IPR008253">
    <property type="entry name" value="Marvel"/>
</dbReference>
<dbReference type="InterPro" id="IPR047123">
    <property type="entry name" value="MYADM-like"/>
</dbReference>
<dbReference type="PANTHER" id="PTHR17068:SF3">
    <property type="entry name" value="MYELOID-ASSOCIATED DIFFERENTIATION MARKER"/>
    <property type="match status" value="1"/>
</dbReference>
<dbReference type="PANTHER" id="PTHR17068">
    <property type="entry name" value="MYELOID-ASSOCIATED DIFFERENTIATION MARKER MYADM FAMILY MEMBER"/>
    <property type="match status" value="1"/>
</dbReference>
<dbReference type="Pfam" id="PF01284">
    <property type="entry name" value="MARVEL"/>
    <property type="match status" value="2"/>
</dbReference>
<dbReference type="PROSITE" id="PS51225">
    <property type="entry name" value="MARVEL"/>
    <property type="match status" value="2"/>
</dbReference>
<reference key="1">
    <citation type="journal article" date="2000" name="J. Leukoc. Biol.">
        <title>Isolation of MYADM, a novel hematopoietic-associated marker gene expressed in multipotent progenitor cells and up-regulated during myeloid differentiation.</title>
        <authorList>
            <person name="Pettersson M."/>
            <person name="Nilsson K."/>
            <person name="Jonsson J.I."/>
        </authorList>
    </citation>
    <scope>NUCLEOTIDE SEQUENCE [MRNA]</scope>
</reference>
<reference key="2">
    <citation type="journal article" date="2005" name="Science">
        <title>The transcriptional landscape of the mammalian genome.</title>
        <authorList>
            <person name="Carninci P."/>
            <person name="Kasukawa T."/>
            <person name="Katayama S."/>
            <person name="Gough J."/>
            <person name="Frith M.C."/>
            <person name="Maeda N."/>
            <person name="Oyama R."/>
            <person name="Ravasi T."/>
            <person name="Lenhard B."/>
            <person name="Wells C."/>
            <person name="Kodzius R."/>
            <person name="Shimokawa K."/>
            <person name="Bajic V.B."/>
            <person name="Brenner S.E."/>
            <person name="Batalov S."/>
            <person name="Forrest A.R."/>
            <person name="Zavolan M."/>
            <person name="Davis M.J."/>
            <person name="Wilming L.G."/>
            <person name="Aidinis V."/>
            <person name="Allen J.E."/>
            <person name="Ambesi-Impiombato A."/>
            <person name="Apweiler R."/>
            <person name="Aturaliya R.N."/>
            <person name="Bailey T.L."/>
            <person name="Bansal M."/>
            <person name="Baxter L."/>
            <person name="Beisel K.W."/>
            <person name="Bersano T."/>
            <person name="Bono H."/>
            <person name="Chalk A.M."/>
            <person name="Chiu K.P."/>
            <person name="Choudhary V."/>
            <person name="Christoffels A."/>
            <person name="Clutterbuck D.R."/>
            <person name="Crowe M.L."/>
            <person name="Dalla E."/>
            <person name="Dalrymple B.P."/>
            <person name="de Bono B."/>
            <person name="Della Gatta G."/>
            <person name="di Bernardo D."/>
            <person name="Down T."/>
            <person name="Engstrom P."/>
            <person name="Fagiolini M."/>
            <person name="Faulkner G."/>
            <person name="Fletcher C.F."/>
            <person name="Fukushima T."/>
            <person name="Furuno M."/>
            <person name="Futaki S."/>
            <person name="Gariboldi M."/>
            <person name="Georgii-Hemming P."/>
            <person name="Gingeras T.R."/>
            <person name="Gojobori T."/>
            <person name="Green R.E."/>
            <person name="Gustincich S."/>
            <person name="Harbers M."/>
            <person name="Hayashi Y."/>
            <person name="Hensch T.K."/>
            <person name="Hirokawa N."/>
            <person name="Hill D."/>
            <person name="Huminiecki L."/>
            <person name="Iacono M."/>
            <person name="Ikeo K."/>
            <person name="Iwama A."/>
            <person name="Ishikawa T."/>
            <person name="Jakt M."/>
            <person name="Kanapin A."/>
            <person name="Katoh M."/>
            <person name="Kawasawa Y."/>
            <person name="Kelso J."/>
            <person name="Kitamura H."/>
            <person name="Kitano H."/>
            <person name="Kollias G."/>
            <person name="Krishnan S.P."/>
            <person name="Kruger A."/>
            <person name="Kummerfeld S.K."/>
            <person name="Kurochkin I.V."/>
            <person name="Lareau L.F."/>
            <person name="Lazarevic D."/>
            <person name="Lipovich L."/>
            <person name="Liu J."/>
            <person name="Liuni S."/>
            <person name="McWilliam S."/>
            <person name="Madan Babu M."/>
            <person name="Madera M."/>
            <person name="Marchionni L."/>
            <person name="Matsuda H."/>
            <person name="Matsuzawa S."/>
            <person name="Miki H."/>
            <person name="Mignone F."/>
            <person name="Miyake S."/>
            <person name="Morris K."/>
            <person name="Mottagui-Tabar S."/>
            <person name="Mulder N."/>
            <person name="Nakano N."/>
            <person name="Nakauchi H."/>
            <person name="Ng P."/>
            <person name="Nilsson R."/>
            <person name="Nishiguchi S."/>
            <person name="Nishikawa S."/>
            <person name="Nori F."/>
            <person name="Ohara O."/>
            <person name="Okazaki Y."/>
            <person name="Orlando V."/>
            <person name="Pang K.C."/>
            <person name="Pavan W.J."/>
            <person name="Pavesi G."/>
            <person name="Pesole G."/>
            <person name="Petrovsky N."/>
            <person name="Piazza S."/>
            <person name="Reed J."/>
            <person name="Reid J.F."/>
            <person name="Ring B.Z."/>
            <person name="Ringwald M."/>
            <person name="Rost B."/>
            <person name="Ruan Y."/>
            <person name="Salzberg S.L."/>
            <person name="Sandelin A."/>
            <person name="Schneider C."/>
            <person name="Schoenbach C."/>
            <person name="Sekiguchi K."/>
            <person name="Semple C.A."/>
            <person name="Seno S."/>
            <person name="Sessa L."/>
            <person name="Sheng Y."/>
            <person name="Shibata Y."/>
            <person name="Shimada H."/>
            <person name="Shimada K."/>
            <person name="Silva D."/>
            <person name="Sinclair B."/>
            <person name="Sperling S."/>
            <person name="Stupka E."/>
            <person name="Sugiura K."/>
            <person name="Sultana R."/>
            <person name="Takenaka Y."/>
            <person name="Taki K."/>
            <person name="Tammoja K."/>
            <person name="Tan S.L."/>
            <person name="Tang S."/>
            <person name="Taylor M.S."/>
            <person name="Tegner J."/>
            <person name="Teichmann S.A."/>
            <person name="Ueda H.R."/>
            <person name="van Nimwegen E."/>
            <person name="Verardo R."/>
            <person name="Wei C.L."/>
            <person name="Yagi K."/>
            <person name="Yamanishi H."/>
            <person name="Zabarovsky E."/>
            <person name="Zhu S."/>
            <person name="Zimmer A."/>
            <person name="Hide W."/>
            <person name="Bult C."/>
            <person name="Grimmond S.M."/>
            <person name="Teasdale R.D."/>
            <person name="Liu E.T."/>
            <person name="Brusic V."/>
            <person name="Quackenbush J."/>
            <person name="Wahlestedt C."/>
            <person name="Mattick J.S."/>
            <person name="Hume D.A."/>
            <person name="Kai C."/>
            <person name="Sasaki D."/>
            <person name="Tomaru Y."/>
            <person name="Fukuda S."/>
            <person name="Kanamori-Katayama M."/>
            <person name="Suzuki M."/>
            <person name="Aoki J."/>
            <person name="Arakawa T."/>
            <person name="Iida J."/>
            <person name="Imamura K."/>
            <person name="Itoh M."/>
            <person name="Kato T."/>
            <person name="Kawaji H."/>
            <person name="Kawagashira N."/>
            <person name="Kawashima T."/>
            <person name="Kojima M."/>
            <person name="Kondo S."/>
            <person name="Konno H."/>
            <person name="Nakano K."/>
            <person name="Ninomiya N."/>
            <person name="Nishio T."/>
            <person name="Okada M."/>
            <person name="Plessy C."/>
            <person name="Shibata K."/>
            <person name="Shiraki T."/>
            <person name="Suzuki S."/>
            <person name="Tagami M."/>
            <person name="Waki K."/>
            <person name="Watahiki A."/>
            <person name="Okamura-Oho Y."/>
            <person name="Suzuki H."/>
            <person name="Kawai J."/>
            <person name="Hayashizaki Y."/>
        </authorList>
    </citation>
    <scope>NUCLEOTIDE SEQUENCE [LARGE SCALE MRNA]</scope>
    <source>
        <strain>C57BL/6J</strain>
        <tissue>Dendritic cell</tissue>
        <tissue>Embryonic heart</tissue>
        <tissue>Eye</tissue>
        <tissue>Macrophage</tissue>
        <tissue>Osteoclast</tissue>
    </source>
</reference>
<reference key="3">
    <citation type="journal article" date="2010" name="Cell">
        <title>A tissue-specific atlas of mouse protein phosphorylation and expression.</title>
        <authorList>
            <person name="Huttlin E.L."/>
            <person name="Jedrychowski M.P."/>
            <person name="Elias J.E."/>
            <person name="Goswami T."/>
            <person name="Rad R."/>
            <person name="Beausoleil S.A."/>
            <person name="Villen J."/>
            <person name="Haas W."/>
            <person name="Sowa M.E."/>
            <person name="Gygi S.P."/>
        </authorList>
    </citation>
    <scope>IDENTIFICATION BY MASS SPECTROMETRY [LARGE SCALE ANALYSIS]</scope>
    <source>
        <tissue>Brain</tissue>
        <tissue>Brown adipose tissue</tissue>
        <tissue>Heart</tissue>
        <tissue>Kidney</tissue>
        <tissue>Liver</tissue>
        <tissue>Lung</tissue>
        <tissue>Pancreas</tissue>
        <tissue>Spleen</tissue>
        <tissue>Testis</tissue>
    </source>
</reference>
<name>MYADM_MOUSE</name>
<comment type="subcellular location">
    <subcellularLocation>
        <location evidence="3">Membrane</location>
        <topology evidence="3">Multi-pass membrane protein</topology>
    </subcellularLocation>
</comment>
<comment type="similarity">
    <text evidence="3">Belongs to the MAL family.</text>
</comment>
<comment type="sequence caution" evidence="3">
    <conflict type="frameshift">
        <sequence resource="EMBL-CDS" id="CAA04870"/>
    </conflict>
</comment>
<keyword id="KW-0472">Membrane</keyword>
<keyword id="KW-1185">Reference proteome</keyword>
<keyword id="KW-0677">Repeat</keyword>
<keyword id="KW-0812">Transmembrane</keyword>
<keyword id="KW-1133">Transmembrane helix</keyword>
<accession>O35682</accession>
<accession>Q8BGS9</accession>
<accession>Q8BPS8</accession>
<feature type="chain" id="PRO_0000156817" description="Myeloid-associated differentiation marker">
    <location>
        <begin position="1"/>
        <end position="320"/>
    </location>
</feature>
<feature type="transmembrane region" description="Helical" evidence="1">
    <location>
        <begin position="35"/>
        <end position="55"/>
    </location>
</feature>
<feature type="transmembrane region" description="Helical" evidence="1">
    <location>
        <begin position="61"/>
        <end position="81"/>
    </location>
</feature>
<feature type="transmembrane region" description="Helical" evidence="1">
    <location>
        <begin position="95"/>
        <end position="115"/>
    </location>
</feature>
<feature type="transmembrane region" description="Helical" evidence="1">
    <location>
        <begin position="131"/>
        <end position="151"/>
    </location>
</feature>
<feature type="transmembrane region" description="Helical" evidence="1">
    <location>
        <begin position="165"/>
        <end position="185"/>
    </location>
</feature>
<feature type="transmembrane region" description="Helical" evidence="1">
    <location>
        <begin position="197"/>
        <end position="217"/>
    </location>
</feature>
<feature type="transmembrane region" description="Helical" evidence="1">
    <location>
        <begin position="233"/>
        <end position="253"/>
    </location>
</feature>
<feature type="transmembrane region" description="Helical" evidence="1">
    <location>
        <begin position="292"/>
        <end position="312"/>
    </location>
</feature>
<feature type="domain" description="MARVEL 1" evidence="2">
    <location>
        <begin position="25"/>
        <end position="157"/>
    </location>
</feature>
<feature type="domain" description="MARVEL 2" evidence="2">
    <location>
        <begin position="162"/>
        <end position="317"/>
    </location>
</feature>
<feature type="sequence conflict" description="In Ref. 1; CAA04870." evidence="3" ref="1">
    <original>S</original>
    <variation>G</variation>
    <location>
        <position position="186"/>
    </location>
</feature>